<comment type="function">
    <text evidence="1">May hydrolyze 6-aminopenicillinic acid and 7-aminocephalosporanic acid (ACA) derivatives.</text>
</comment>
<comment type="catalytic activity">
    <reaction>
        <text>a beta-lactam + H2O = a substituted beta-amino acid</text>
        <dbReference type="Rhea" id="RHEA:20401"/>
        <dbReference type="ChEBI" id="CHEBI:15377"/>
        <dbReference type="ChEBI" id="CHEBI:35627"/>
        <dbReference type="ChEBI" id="CHEBI:140347"/>
        <dbReference type="EC" id="3.5.2.6"/>
    </reaction>
</comment>
<comment type="subcellular location">
    <subcellularLocation>
        <location evidence="3">Secreted</location>
    </subcellularLocation>
</comment>
<comment type="similarity">
    <text evidence="3">Belongs to the hcp beta-lactamase family.</text>
</comment>
<keyword id="KW-0046">Antibiotic resistance</keyword>
<keyword id="KW-1015">Disulfide bond</keyword>
<keyword id="KW-0378">Hydrolase</keyword>
<keyword id="KW-0677">Repeat</keyword>
<keyword id="KW-0964">Secreted</keyword>
<keyword id="KW-0732">Signal</keyword>
<keyword id="KW-0802">TPR repeat</keyword>
<reference key="1">
    <citation type="journal article" date="1999" name="Nature">
        <title>Genomic sequence comparison of two unrelated isolates of the human gastric pathogen Helicobacter pylori.</title>
        <authorList>
            <person name="Alm R.A."/>
            <person name="Ling L.-S.L."/>
            <person name="Moir D.T."/>
            <person name="King B.L."/>
            <person name="Brown E.D."/>
            <person name="Doig P.C."/>
            <person name="Smith D.R."/>
            <person name="Noonan B."/>
            <person name="Guild B.C."/>
            <person name="deJonge B.L."/>
            <person name="Carmel G."/>
            <person name="Tummino P.J."/>
            <person name="Caruso A."/>
            <person name="Uria-Nickelsen M."/>
            <person name="Mills D.M."/>
            <person name="Ives C."/>
            <person name="Gibson R."/>
            <person name="Merberg D."/>
            <person name="Mills S.D."/>
            <person name="Jiang Q."/>
            <person name="Taylor D.E."/>
            <person name="Vovis G.F."/>
            <person name="Trust T.J."/>
        </authorList>
    </citation>
    <scope>NUCLEOTIDE SEQUENCE [LARGE SCALE GENOMIC DNA]</scope>
    <source>
        <strain>J99 / ATCC 700824</strain>
    </source>
</reference>
<evidence type="ECO:0000250" key="1"/>
<evidence type="ECO:0000255" key="2"/>
<evidence type="ECO:0000305" key="3"/>
<name>HCPE_HELPJ</name>
<sequence>MNIKILKILVGGLFFLSLNAHLWGKQDNSFLGIGERAYKSGNYSKAASYFKKACNDGVSEGCTQLGIIYENGQGTRIDYKKALEYYKTACQADDREGCFGLGGLYDEGLGTAQNYQEAIDAYAKACVLKHPESCYNLGIIYDRKIKGNAAQAVTYYQKSCNFDMAKGCYILGTAYEKGFLEVKQSNHKAVIYYLKACRLNEGQACRALGSLFENGDAGLDEDFEVAFDYLQKACALNNSGGCASLGSMYMLGRYVKKDPQKAFNYFKQACDMGSAVSCSRMGFMYSQGDTVSKDLRKALDNYERGCDMGDEVGCFALAGMYYNMKDKENAIMIYDKGCKLGMKQACENLTKLRGY</sequence>
<feature type="signal peptide" evidence="2">
    <location>
        <begin position="1"/>
        <end position="22"/>
    </location>
</feature>
<feature type="chain" id="PRO_0000013201" description="Putative beta-lactamase HcpE">
    <location>
        <begin position="23"/>
        <end position="355"/>
    </location>
</feature>
<feature type="repeat" description="TPR 1">
    <location>
        <begin position="27"/>
        <end position="60"/>
    </location>
</feature>
<feature type="repeat" description="TPR 2">
    <location>
        <begin position="63"/>
        <end position="96"/>
    </location>
</feature>
<feature type="repeat" description="TPR 3">
    <location>
        <begin position="98"/>
        <end position="131"/>
    </location>
</feature>
<feature type="repeat" description="TPR 4">
    <location>
        <begin position="132"/>
        <end position="166"/>
    </location>
</feature>
<feature type="repeat" description="TPR 5">
    <location>
        <begin position="202"/>
        <end position="240"/>
    </location>
</feature>
<feature type="repeat" description="TPR 6">
    <location>
        <begin position="245"/>
        <end position="275"/>
    </location>
</feature>
<feature type="repeat" description="TPR 7">
    <location>
        <begin position="276"/>
        <end position="311"/>
    </location>
</feature>
<feature type="repeat" description="TPR 8">
    <location>
        <begin position="312"/>
        <end position="344"/>
    </location>
</feature>
<feature type="disulfide bond" evidence="2">
    <location>
        <begin position="54"/>
        <end position="62"/>
    </location>
</feature>
<feature type="disulfide bond" evidence="2">
    <location>
        <begin position="90"/>
        <end position="98"/>
    </location>
</feature>
<feature type="disulfide bond" evidence="2">
    <location>
        <begin position="126"/>
        <end position="134"/>
    </location>
</feature>
<feature type="disulfide bond" evidence="2">
    <location>
        <begin position="160"/>
        <end position="168"/>
    </location>
</feature>
<feature type="disulfide bond" evidence="2">
    <location>
        <begin position="197"/>
        <end position="205"/>
    </location>
</feature>
<feature type="disulfide bond" evidence="2">
    <location>
        <begin position="234"/>
        <end position="242"/>
    </location>
</feature>
<feature type="disulfide bond" evidence="2">
    <location>
        <begin position="270"/>
        <end position="278"/>
    </location>
</feature>
<feature type="disulfide bond" evidence="2">
    <location>
        <begin position="306"/>
        <end position="314"/>
    </location>
</feature>
<feature type="disulfide bond" evidence="2">
    <location>
        <begin position="338"/>
        <end position="346"/>
    </location>
</feature>
<proteinExistence type="inferred from homology"/>
<dbReference type="EC" id="3.5.2.6"/>
<dbReference type="EMBL" id="AE001439">
    <property type="protein sequence ID" value="AAD05807.1"/>
    <property type="molecule type" value="Genomic_DNA"/>
</dbReference>
<dbReference type="PIR" id="G71958">
    <property type="entry name" value="G71958"/>
</dbReference>
<dbReference type="RefSeq" id="WP_001022031.1">
    <property type="nucleotide sequence ID" value="NC_000921.1"/>
</dbReference>
<dbReference type="SMR" id="Q9ZMJ9"/>
<dbReference type="KEGG" id="hpj:jhp_0220"/>
<dbReference type="PATRIC" id="fig|85963.30.peg.794"/>
<dbReference type="eggNOG" id="COG0790">
    <property type="taxonomic scope" value="Bacteria"/>
</dbReference>
<dbReference type="Proteomes" id="UP000000804">
    <property type="component" value="Chromosome"/>
</dbReference>
<dbReference type="GO" id="GO:0005576">
    <property type="term" value="C:extracellular region"/>
    <property type="evidence" value="ECO:0007669"/>
    <property type="project" value="UniProtKB-SubCell"/>
</dbReference>
<dbReference type="GO" id="GO:0008800">
    <property type="term" value="F:beta-lactamase activity"/>
    <property type="evidence" value="ECO:0007669"/>
    <property type="project" value="UniProtKB-EC"/>
</dbReference>
<dbReference type="GO" id="GO:0046677">
    <property type="term" value="P:response to antibiotic"/>
    <property type="evidence" value="ECO:0007669"/>
    <property type="project" value="UniProtKB-KW"/>
</dbReference>
<dbReference type="Gene3D" id="1.25.40.10">
    <property type="entry name" value="Tetratricopeptide repeat domain"/>
    <property type="match status" value="2"/>
</dbReference>
<dbReference type="InterPro" id="IPR040239">
    <property type="entry name" value="HcpB-like"/>
</dbReference>
<dbReference type="InterPro" id="IPR006597">
    <property type="entry name" value="Sel1-like"/>
</dbReference>
<dbReference type="InterPro" id="IPR011990">
    <property type="entry name" value="TPR-like_helical_dom_sf"/>
</dbReference>
<dbReference type="InterPro" id="IPR019734">
    <property type="entry name" value="TPR_rpt"/>
</dbReference>
<dbReference type="PANTHER" id="PTHR13891">
    <property type="entry name" value="CYTOCHROME C OXIDASE ASSEMBLY FACTOR 7"/>
    <property type="match status" value="1"/>
</dbReference>
<dbReference type="PANTHER" id="PTHR13891:SF1">
    <property type="entry name" value="CYTOCHROME C OXIDASE ASSEMBLY FACTOR 7"/>
    <property type="match status" value="1"/>
</dbReference>
<dbReference type="Pfam" id="PF08238">
    <property type="entry name" value="Sel1"/>
    <property type="match status" value="8"/>
</dbReference>
<dbReference type="Pfam" id="PF13181">
    <property type="entry name" value="TPR_8"/>
    <property type="match status" value="1"/>
</dbReference>
<dbReference type="SMART" id="SM00671">
    <property type="entry name" value="SEL1"/>
    <property type="match status" value="8"/>
</dbReference>
<dbReference type="SUPFAM" id="SSF81901">
    <property type="entry name" value="HCP-like"/>
    <property type="match status" value="2"/>
</dbReference>
<organism>
    <name type="scientific">Helicobacter pylori (strain J99 / ATCC 700824)</name>
    <name type="common">Campylobacter pylori J99</name>
    <dbReference type="NCBI Taxonomy" id="85963"/>
    <lineage>
        <taxon>Bacteria</taxon>
        <taxon>Pseudomonadati</taxon>
        <taxon>Campylobacterota</taxon>
        <taxon>Epsilonproteobacteria</taxon>
        <taxon>Campylobacterales</taxon>
        <taxon>Helicobacteraceae</taxon>
        <taxon>Helicobacter</taxon>
    </lineage>
</organism>
<accession>Q9ZMJ9</accession>
<gene>
    <name type="primary">hcpE</name>
    <name type="ordered locus">jhp_0220</name>
</gene>
<protein>
    <recommendedName>
        <fullName>Putative beta-lactamase HcpE</fullName>
        <ecNumber>3.5.2.6</ecNumber>
    </recommendedName>
    <alternativeName>
        <fullName>Cysteine-rich protein E</fullName>
    </alternativeName>
</protein>